<comment type="similarity">
    <text evidence="1">Belongs to the UPF0502 family.</text>
</comment>
<accession>B7NL67</accession>
<proteinExistence type="inferred from homology"/>
<feature type="chain" id="PRO_1000201245" description="UPF0502 protein YceH">
    <location>
        <begin position="1"/>
        <end position="215"/>
    </location>
</feature>
<feature type="modified residue" description="N6-acetyllysine" evidence="1">
    <location>
        <position position="80"/>
    </location>
</feature>
<dbReference type="EMBL" id="CU928164">
    <property type="protein sequence ID" value="CAR18223.1"/>
    <property type="molecule type" value="Genomic_DNA"/>
</dbReference>
<dbReference type="RefSeq" id="WP_000877117.1">
    <property type="nucleotide sequence ID" value="NC_011750.1"/>
</dbReference>
<dbReference type="RefSeq" id="YP_002408059.1">
    <property type="nucleotide sequence ID" value="NC_011750.1"/>
</dbReference>
<dbReference type="SMR" id="B7NL67"/>
<dbReference type="STRING" id="585057.ECIAI39_2096"/>
<dbReference type="KEGG" id="ect:ECIAI39_2096"/>
<dbReference type="PATRIC" id="fig|585057.6.peg.2178"/>
<dbReference type="HOGENOM" id="CLU_057831_2_0_6"/>
<dbReference type="Proteomes" id="UP000000749">
    <property type="component" value="Chromosome"/>
</dbReference>
<dbReference type="FunFam" id="1.10.10.10:FF:000196">
    <property type="entry name" value="UPF0502 protein YceH"/>
    <property type="match status" value="1"/>
</dbReference>
<dbReference type="FunFam" id="1.10.10.10:FF:000241">
    <property type="entry name" value="UPF0502 protein YceH"/>
    <property type="match status" value="1"/>
</dbReference>
<dbReference type="Gene3D" id="1.10.10.10">
    <property type="entry name" value="Winged helix-like DNA-binding domain superfamily/Winged helix DNA-binding domain"/>
    <property type="match status" value="2"/>
</dbReference>
<dbReference type="HAMAP" id="MF_01584">
    <property type="entry name" value="UPF0502"/>
    <property type="match status" value="1"/>
</dbReference>
<dbReference type="InterPro" id="IPR007432">
    <property type="entry name" value="DUF480"/>
</dbReference>
<dbReference type="InterPro" id="IPR036388">
    <property type="entry name" value="WH-like_DNA-bd_sf"/>
</dbReference>
<dbReference type="InterPro" id="IPR036390">
    <property type="entry name" value="WH_DNA-bd_sf"/>
</dbReference>
<dbReference type="NCBIfam" id="NF008413">
    <property type="entry name" value="PRK11239.1"/>
    <property type="match status" value="1"/>
</dbReference>
<dbReference type="PANTHER" id="PTHR38768">
    <property type="entry name" value="UPF0502 PROTEIN YCEH"/>
    <property type="match status" value="1"/>
</dbReference>
<dbReference type="PANTHER" id="PTHR38768:SF1">
    <property type="entry name" value="UPF0502 PROTEIN YCEH"/>
    <property type="match status" value="1"/>
</dbReference>
<dbReference type="Pfam" id="PF04337">
    <property type="entry name" value="DUF480"/>
    <property type="match status" value="1"/>
</dbReference>
<dbReference type="SUPFAM" id="SSF46785">
    <property type="entry name" value="Winged helix' DNA-binding domain"/>
    <property type="match status" value="2"/>
</dbReference>
<name>YCEH_ECO7I</name>
<keyword id="KW-0007">Acetylation</keyword>
<protein>
    <recommendedName>
        <fullName evidence="1">UPF0502 protein YceH</fullName>
    </recommendedName>
</protein>
<gene>
    <name evidence="1" type="primary">yceH</name>
    <name type="ordered locus">ECIAI39_2096</name>
</gene>
<organism>
    <name type="scientific">Escherichia coli O7:K1 (strain IAI39 / ExPEC)</name>
    <dbReference type="NCBI Taxonomy" id="585057"/>
    <lineage>
        <taxon>Bacteria</taxon>
        <taxon>Pseudomonadati</taxon>
        <taxon>Pseudomonadota</taxon>
        <taxon>Gammaproteobacteria</taxon>
        <taxon>Enterobacterales</taxon>
        <taxon>Enterobacteriaceae</taxon>
        <taxon>Escherichia</taxon>
    </lineage>
</organism>
<sequence>MKYQLTALEARVIGCLLEKQVTTPEQYPLSVNGVVTACNQKTNREPVMNLSESEVQEQLDNLVKRHYLRTVSGFGNRVTKYEQRFCNSEFGDLKLSAAEVALITTLLLRGAQTPGELRSRAARMYEFSDMAEVESTLEQLANREDGPFVVRLAREPGKRESRYMHLFSGEVEDQPAVTDMSNAVDGDLQARVEALEIEVAELKQRLDSLLAHQGD</sequence>
<evidence type="ECO:0000255" key="1">
    <source>
        <dbReference type="HAMAP-Rule" id="MF_01584"/>
    </source>
</evidence>
<reference key="1">
    <citation type="journal article" date="2009" name="PLoS Genet.">
        <title>Organised genome dynamics in the Escherichia coli species results in highly diverse adaptive paths.</title>
        <authorList>
            <person name="Touchon M."/>
            <person name="Hoede C."/>
            <person name="Tenaillon O."/>
            <person name="Barbe V."/>
            <person name="Baeriswyl S."/>
            <person name="Bidet P."/>
            <person name="Bingen E."/>
            <person name="Bonacorsi S."/>
            <person name="Bouchier C."/>
            <person name="Bouvet O."/>
            <person name="Calteau A."/>
            <person name="Chiapello H."/>
            <person name="Clermont O."/>
            <person name="Cruveiller S."/>
            <person name="Danchin A."/>
            <person name="Diard M."/>
            <person name="Dossat C."/>
            <person name="Karoui M.E."/>
            <person name="Frapy E."/>
            <person name="Garry L."/>
            <person name="Ghigo J.M."/>
            <person name="Gilles A.M."/>
            <person name="Johnson J."/>
            <person name="Le Bouguenec C."/>
            <person name="Lescat M."/>
            <person name="Mangenot S."/>
            <person name="Martinez-Jehanne V."/>
            <person name="Matic I."/>
            <person name="Nassif X."/>
            <person name="Oztas S."/>
            <person name="Petit M.A."/>
            <person name="Pichon C."/>
            <person name="Rouy Z."/>
            <person name="Ruf C.S."/>
            <person name="Schneider D."/>
            <person name="Tourret J."/>
            <person name="Vacherie B."/>
            <person name="Vallenet D."/>
            <person name="Medigue C."/>
            <person name="Rocha E.P.C."/>
            <person name="Denamur E."/>
        </authorList>
    </citation>
    <scope>NUCLEOTIDE SEQUENCE [LARGE SCALE GENOMIC DNA]</scope>
    <source>
        <strain>IAI39 / ExPEC</strain>
    </source>
</reference>